<sequence>MGVTKKPDLTDPVLRAKLAKGMGHNYYGEPAWPNDLLYMFPVVILGTIACNVGLAVLEPSLVGEPANPFATPLEILPEWYFFPVFQILRTVPNKLLGVLLMAAVPAGLLTVPFIENVNKFQNPFRRPVATTVFLIGTVVAIWLGIGATLPIDTSLTLGLF</sequence>
<accession>Q71KQ5</accession>
<proteinExistence type="inferred from homology"/>
<geneLocation type="chloroplast"/>
<keyword id="KW-0150">Chloroplast</keyword>
<keyword id="KW-0249">Electron transport</keyword>
<keyword id="KW-0472">Membrane</keyword>
<keyword id="KW-0602">Photosynthesis</keyword>
<keyword id="KW-0934">Plastid</keyword>
<keyword id="KW-0793">Thylakoid</keyword>
<keyword id="KW-0812">Transmembrane</keyword>
<keyword id="KW-1133">Transmembrane helix</keyword>
<keyword id="KW-0813">Transport</keyword>
<feature type="chain" id="PRO_0000061854" description="Cytochrome b6-f complex subunit 4">
    <location>
        <begin position="1"/>
        <end position="160"/>
    </location>
</feature>
<feature type="transmembrane region" description="Helical" evidence="2">
    <location>
        <begin position="36"/>
        <end position="56"/>
    </location>
</feature>
<feature type="transmembrane region" description="Helical" evidence="2">
    <location>
        <begin position="95"/>
        <end position="115"/>
    </location>
</feature>
<feature type="transmembrane region" description="Helical" evidence="2">
    <location>
        <begin position="131"/>
        <end position="151"/>
    </location>
</feature>
<evidence type="ECO:0000250" key="1"/>
<evidence type="ECO:0000255" key="2">
    <source>
        <dbReference type="HAMAP-Rule" id="MF_01344"/>
    </source>
</evidence>
<gene>
    <name evidence="2" type="primary">petD</name>
</gene>
<dbReference type="EMBL" id="AF482495">
    <property type="protein sequence ID" value="AAQ05901.1"/>
    <property type="molecule type" value="Genomic_DNA"/>
</dbReference>
<dbReference type="SMR" id="Q71KQ5"/>
<dbReference type="GO" id="GO:0009535">
    <property type="term" value="C:chloroplast thylakoid membrane"/>
    <property type="evidence" value="ECO:0007669"/>
    <property type="project" value="UniProtKB-SubCell"/>
</dbReference>
<dbReference type="GO" id="GO:0005739">
    <property type="term" value="C:mitochondrion"/>
    <property type="evidence" value="ECO:0007669"/>
    <property type="project" value="GOC"/>
</dbReference>
<dbReference type="GO" id="GO:0045158">
    <property type="term" value="F:electron transporter, transferring electrons within cytochrome b6/f complex of photosystem II activity"/>
    <property type="evidence" value="ECO:0007669"/>
    <property type="project" value="UniProtKB-UniRule"/>
</dbReference>
<dbReference type="GO" id="GO:0045156">
    <property type="term" value="F:electron transporter, transferring electrons within the cyclic electron transport pathway of photosynthesis activity"/>
    <property type="evidence" value="ECO:0007669"/>
    <property type="project" value="InterPro"/>
</dbReference>
<dbReference type="GO" id="GO:0008121">
    <property type="term" value="F:ubiquinol-cytochrome-c reductase activity"/>
    <property type="evidence" value="ECO:0007669"/>
    <property type="project" value="TreeGrafter"/>
</dbReference>
<dbReference type="GO" id="GO:0006122">
    <property type="term" value="P:mitochondrial electron transport, ubiquinol to cytochrome c"/>
    <property type="evidence" value="ECO:0007669"/>
    <property type="project" value="TreeGrafter"/>
</dbReference>
<dbReference type="GO" id="GO:0009767">
    <property type="term" value="P:photosynthetic electron transport chain"/>
    <property type="evidence" value="ECO:0007669"/>
    <property type="project" value="InterPro"/>
</dbReference>
<dbReference type="CDD" id="cd00290">
    <property type="entry name" value="cytochrome_b_C"/>
    <property type="match status" value="1"/>
</dbReference>
<dbReference type="FunFam" id="1.10.287.980:FF:000001">
    <property type="entry name" value="Cytochrome b6-f complex subunit 4"/>
    <property type="match status" value="1"/>
</dbReference>
<dbReference type="FunFam" id="1.20.5.510:FF:000002">
    <property type="entry name" value="Cytochrome b6-f complex subunit 4"/>
    <property type="match status" value="1"/>
</dbReference>
<dbReference type="Gene3D" id="1.10.287.980">
    <property type="entry name" value="plastocyanin oxidoreductase"/>
    <property type="match status" value="1"/>
</dbReference>
<dbReference type="Gene3D" id="1.20.5.510">
    <property type="entry name" value="Single helix bin"/>
    <property type="match status" value="1"/>
</dbReference>
<dbReference type="HAMAP" id="MF_01344">
    <property type="entry name" value="Cytb6_f_subIV"/>
    <property type="match status" value="1"/>
</dbReference>
<dbReference type="InterPro" id="IPR005798">
    <property type="entry name" value="Cyt_b/b6_C"/>
</dbReference>
<dbReference type="InterPro" id="IPR036150">
    <property type="entry name" value="Cyt_b/b6_C_sf"/>
</dbReference>
<dbReference type="InterPro" id="IPR005870">
    <property type="entry name" value="Cyt_b6/f_cplx_suIV"/>
</dbReference>
<dbReference type="InterPro" id="IPR048260">
    <property type="entry name" value="Cytochrome_b_C_euk/bac"/>
</dbReference>
<dbReference type="NCBIfam" id="TIGR01156">
    <property type="entry name" value="cytb6_f_IV"/>
    <property type="match status" value="1"/>
</dbReference>
<dbReference type="PANTHER" id="PTHR19271">
    <property type="entry name" value="CYTOCHROME B"/>
    <property type="match status" value="1"/>
</dbReference>
<dbReference type="PANTHER" id="PTHR19271:SF41">
    <property type="entry name" value="CYTOCHROME B_B6 C-TERMINAL REGION PROFILE DOMAIN-CONTAINING PROTEIN"/>
    <property type="match status" value="1"/>
</dbReference>
<dbReference type="Pfam" id="PF00032">
    <property type="entry name" value="Cytochrom_B_C"/>
    <property type="match status" value="1"/>
</dbReference>
<dbReference type="PIRSF" id="PIRSF000033">
    <property type="entry name" value="B6f_17K"/>
    <property type="match status" value="1"/>
</dbReference>
<dbReference type="SUPFAM" id="SSF81648">
    <property type="entry name" value="a domain/subunit of cytochrome bc1 complex (Ubiquinol-cytochrome c reductase)"/>
    <property type="match status" value="1"/>
</dbReference>
<dbReference type="PROSITE" id="PS51003">
    <property type="entry name" value="CYTB_CTER"/>
    <property type="match status" value="1"/>
</dbReference>
<name>PETD_COLOB</name>
<protein>
    <recommendedName>
        <fullName evidence="2">Cytochrome b6-f complex subunit 4</fullName>
    </recommendedName>
    <alternativeName>
        <fullName evidence="2">17 kDa polypeptide</fullName>
    </alternativeName>
</protein>
<organism>
    <name type="scientific">Coleochaete orbicularis</name>
    <name type="common">Charophycean green alga</name>
    <dbReference type="NCBI Taxonomy" id="3124"/>
    <lineage>
        <taxon>Eukaryota</taxon>
        <taxon>Viridiplantae</taxon>
        <taxon>Streptophyta</taxon>
        <taxon>Coleochaetophyceae</taxon>
        <taxon>Coleochaetales</taxon>
        <taxon>Coleochaetaceae</taxon>
        <taxon>Coleochaete</taxon>
    </lineage>
</organism>
<reference key="1">
    <citation type="submission" date="2002-02" db="EMBL/GenBank/DDBJ databases">
        <title>psbB gene cluster of Charophyceae.</title>
        <authorList>
            <person name="Lee J."/>
            <person name="Manhart J.R."/>
        </authorList>
    </citation>
    <scope>NUCLEOTIDE SEQUENCE [GENOMIC DNA]</scope>
</reference>
<comment type="function">
    <text evidence="2">Component of the cytochrome b6-f complex, which mediates electron transfer between photosystem II (PSII) and photosystem I (PSI), cyclic electron flow around PSI, and state transitions.</text>
</comment>
<comment type="subunit">
    <text evidence="1">The 4 large subunits of the cytochrome b6-f complex are cytochrome b6, subunit IV (17 kDa polypeptide, petD), cytochrome f and the Rieske protein, while the 4 small subunits are petG, petL, petM and petN. The complex functions as a dimer (By similarity).</text>
</comment>
<comment type="subcellular location">
    <subcellularLocation>
        <location evidence="2">Plastid</location>
        <location evidence="2">Chloroplast thylakoid membrane</location>
        <topology evidence="2">Multi-pass membrane protein</topology>
    </subcellularLocation>
</comment>
<comment type="similarity">
    <text evidence="2">Belongs to the cytochrome b family. PetD subfamily.</text>
</comment>